<feature type="chain" id="PRO_1000022366" description="Pyridoxine 5'-phosphate synthase">
    <location>
        <begin position="1"/>
        <end position="257"/>
    </location>
</feature>
<feature type="active site" description="Proton acceptor" evidence="1">
    <location>
        <position position="42"/>
    </location>
</feature>
<feature type="active site" description="Proton acceptor" evidence="1">
    <location>
        <position position="69"/>
    </location>
</feature>
<feature type="active site" description="Proton donor" evidence="1">
    <location>
        <position position="211"/>
    </location>
</feature>
<feature type="binding site" evidence="1">
    <location>
        <position position="6"/>
    </location>
    <ligand>
        <name>3-amino-2-oxopropyl phosphate</name>
        <dbReference type="ChEBI" id="CHEBI:57279"/>
    </ligand>
</feature>
<feature type="binding site" evidence="1">
    <location>
        <begin position="8"/>
        <end position="9"/>
    </location>
    <ligand>
        <name>1-deoxy-D-xylulose 5-phosphate</name>
        <dbReference type="ChEBI" id="CHEBI:57792"/>
    </ligand>
</feature>
<feature type="binding site" evidence="1">
    <location>
        <position position="17"/>
    </location>
    <ligand>
        <name>3-amino-2-oxopropyl phosphate</name>
        <dbReference type="ChEBI" id="CHEBI:57279"/>
    </ligand>
</feature>
<feature type="binding site" evidence="1">
    <location>
        <position position="44"/>
    </location>
    <ligand>
        <name>1-deoxy-D-xylulose 5-phosphate</name>
        <dbReference type="ChEBI" id="CHEBI:57792"/>
    </ligand>
</feature>
<feature type="binding site" evidence="1">
    <location>
        <position position="49"/>
    </location>
    <ligand>
        <name>1-deoxy-D-xylulose 5-phosphate</name>
        <dbReference type="ChEBI" id="CHEBI:57792"/>
    </ligand>
</feature>
<feature type="binding site" evidence="1">
    <location>
        <position position="99"/>
    </location>
    <ligand>
        <name>1-deoxy-D-xylulose 5-phosphate</name>
        <dbReference type="ChEBI" id="CHEBI:57792"/>
    </ligand>
</feature>
<feature type="binding site" evidence="1">
    <location>
        <position position="212"/>
    </location>
    <ligand>
        <name>3-amino-2-oxopropyl phosphate</name>
        <dbReference type="ChEBI" id="CHEBI:57279"/>
    </ligand>
</feature>
<feature type="binding site" evidence="1">
    <location>
        <begin position="233"/>
        <end position="234"/>
    </location>
    <ligand>
        <name>3-amino-2-oxopropyl phosphate</name>
        <dbReference type="ChEBI" id="CHEBI:57279"/>
    </ligand>
</feature>
<feature type="site" description="Transition state stabilizer" evidence="1">
    <location>
        <position position="148"/>
    </location>
</feature>
<organism>
    <name type="scientific">Campylobacter hominis (strain ATCC BAA-381 / DSM 21671 / CCUG 45161 / LMG 19568 / NCTC 13146 / CH001A)</name>
    <dbReference type="NCBI Taxonomy" id="360107"/>
    <lineage>
        <taxon>Bacteria</taxon>
        <taxon>Pseudomonadati</taxon>
        <taxon>Campylobacterota</taxon>
        <taxon>Epsilonproteobacteria</taxon>
        <taxon>Campylobacterales</taxon>
        <taxon>Campylobacteraceae</taxon>
        <taxon>Campylobacter</taxon>
    </lineage>
</organism>
<keyword id="KW-0963">Cytoplasm</keyword>
<keyword id="KW-0664">Pyridoxine biosynthesis</keyword>
<keyword id="KW-1185">Reference proteome</keyword>
<keyword id="KW-0808">Transferase</keyword>
<proteinExistence type="inferred from homology"/>
<name>PDXJ_CAMHC</name>
<gene>
    <name evidence="1" type="primary">pdxJ</name>
    <name type="ordered locus">CHAB381_1714</name>
</gene>
<dbReference type="EC" id="2.6.99.2" evidence="1"/>
<dbReference type="EMBL" id="CP000776">
    <property type="protein sequence ID" value="ABS50983.1"/>
    <property type="molecule type" value="Genomic_DNA"/>
</dbReference>
<dbReference type="RefSeq" id="WP_012109533.1">
    <property type="nucleotide sequence ID" value="NC_009714.1"/>
</dbReference>
<dbReference type="SMR" id="A7I3Y5"/>
<dbReference type="STRING" id="360107.CHAB381_1714"/>
<dbReference type="KEGG" id="cha:CHAB381_1714"/>
<dbReference type="eggNOG" id="COG0854">
    <property type="taxonomic scope" value="Bacteria"/>
</dbReference>
<dbReference type="HOGENOM" id="CLU_074563_0_0_7"/>
<dbReference type="OrthoDB" id="9806590at2"/>
<dbReference type="UniPathway" id="UPA00244">
    <property type="reaction ID" value="UER00313"/>
</dbReference>
<dbReference type="Proteomes" id="UP000002407">
    <property type="component" value="Chromosome"/>
</dbReference>
<dbReference type="GO" id="GO:0005829">
    <property type="term" value="C:cytosol"/>
    <property type="evidence" value="ECO:0007669"/>
    <property type="project" value="TreeGrafter"/>
</dbReference>
<dbReference type="GO" id="GO:0033856">
    <property type="term" value="F:pyridoxine 5'-phosphate synthase activity"/>
    <property type="evidence" value="ECO:0007669"/>
    <property type="project" value="UniProtKB-EC"/>
</dbReference>
<dbReference type="GO" id="GO:0008615">
    <property type="term" value="P:pyridoxine biosynthetic process"/>
    <property type="evidence" value="ECO:0007669"/>
    <property type="project" value="UniProtKB-UniRule"/>
</dbReference>
<dbReference type="CDD" id="cd00003">
    <property type="entry name" value="PNPsynthase"/>
    <property type="match status" value="1"/>
</dbReference>
<dbReference type="Gene3D" id="3.20.20.70">
    <property type="entry name" value="Aldolase class I"/>
    <property type="match status" value="1"/>
</dbReference>
<dbReference type="HAMAP" id="MF_00279">
    <property type="entry name" value="PdxJ"/>
    <property type="match status" value="1"/>
</dbReference>
<dbReference type="InterPro" id="IPR013785">
    <property type="entry name" value="Aldolase_TIM"/>
</dbReference>
<dbReference type="InterPro" id="IPR004569">
    <property type="entry name" value="PyrdxlP_synth_PdxJ"/>
</dbReference>
<dbReference type="InterPro" id="IPR036130">
    <property type="entry name" value="Pyridoxine-5'_phos_synth"/>
</dbReference>
<dbReference type="NCBIfam" id="TIGR00559">
    <property type="entry name" value="pdxJ"/>
    <property type="match status" value="1"/>
</dbReference>
<dbReference type="NCBIfam" id="NF003625">
    <property type="entry name" value="PRK05265.1-3"/>
    <property type="match status" value="1"/>
</dbReference>
<dbReference type="NCBIfam" id="NF003627">
    <property type="entry name" value="PRK05265.1-5"/>
    <property type="match status" value="1"/>
</dbReference>
<dbReference type="PANTHER" id="PTHR30456">
    <property type="entry name" value="PYRIDOXINE 5'-PHOSPHATE SYNTHASE"/>
    <property type="match status" value="1"/>
</dbReference>
<dbReference type="PANTHER" id="PTHR30456:SF0">
    <property type="entry name" value="PYRIDOXINE 5'-PHOSPHATE SYNTHASE"/>
    <property type="match status" value="1"/>
</dbReference>
<dbReference type="Pfam" id="PF03740">
    <property type="entry name" value="PdxJ"/>
    <property type="match status" value="1"/>
</dbReference>
<dbReference type="SUPFAM" id="SSF63892">
    <property type="entry name" value="Pyridoxine 5'-phosphate synthase"/>
    <property type="match status" value="1"/>
</dbReference>
<reference key="1">
    <citation type="submission" date="2007-07" db="EMBL/GenBank/DDBJ databases">
        <title>Complete genome sequence of Campylobacter hominis ATCC BAA-381, a commensal isolated from the human gastrointestinal tract.</title>
        <authorList>
            <person name="Fouts D.E."/>
            <person name="Mongodin E.F."/>
            <person name="Puiu D."/>
            <person name="Sebastian Y."/>
            <person name="Miller W.G."/>
            <person name="Mandrell R.E."/>
            <person name="Nelson K.E."/>
        </authorList>
    </citation>
    <scope>NUCLEOTIDE SEQUENCE [LARGE SCALE GENOMIC DNA]</scope>
    <source>
        <strain>ATCC BAA-381 / DSM 21671 / CCUG 45161 / LMG 19568 / NCTC 13146 / CH001A</strain>
    </source>
</reference>
<comment type="function">
    <text evidence="1">Catalyzes the complicated ring closure reaction between the two acyclic compounds 1-deoxy-D-xylulose-5-phosphate (DXP) and 3-amino-2-oxopropyl phosphate (1-amino-acetone-3-phosphate or AAP) to form pyridoxine 5'-phosphate (PNP) and inorganic phosphate.</text>
</comment>
<comment type="catalytic activity">
    <reaction evidence="1">
        <text>3-amino-2-oxopropyl phosphate + 1-deoxy-D-xylulose 5-phosphate = pyridoxine 5'-phosphate + phosphate + 2 H2O + H(+)</text>
        <dbReference type="Rhea" id="RHEA:15265"/>
        <dbReference type="ChEBI" id="CHEBI:15377"/>
        <dbReference type="ChEBI" id="CHEBI:15378"/>
        <dbReference type="ChEBI" id="CHEBI:43474"/>
        <dbReference type="ChEBI" id="CHEBI:57279"/>
        <dbReference type="ChEBI" id="CHEBI:57792"/>
        <dbReference type="ChEBI" id="CHEBI:58589"/>
        <dbReference type="EC" id="2.6.99.2"/>
    </reaction>
</comment>
<comment type="pathway">
    <text evidence="1">Cofactor biosynthesis; pyridoxine 5'-phosphate biosynthesis; pyridoxine 5'-phosphate from D-erythrose 4-phosphate: step 5/5.</text>
</comment>
<comment type="subunit">
    <text evidence="1">Homooctamer; tetramer of dimers.</text>
</comment>
<comment type="subcellular location">
    <subcellularLocation>
        <location evidence="1">Cytoplasm</location>
    </subcellularLocation>
</comment>
<comment type="similarity">
    <text evidence="1">Belongs to the PNP synthase family.</text>
</comment>
<sequence length="257" mass="28693">MLLGVNIDHIAVLREARQVNDPDILMGMYAAIIGGADQITTHLREDRRHINENDVKDIINHSRVPVNLECSINEEIIDFVCKFRPHRATLVPEKREELTTEGGLNLSTAGLENIINRLKNEGIKVSLFIDTSRENIDIASELAVDCIELHTGTYANIFNMLNSNIALTKYSIKNYEKSREDLQNLLKDELANIKHLAAYAKGLGLKVAAGHGLNYQNVASLTKNSEIFELNIGQSIIARAIFVGMKTAVCEMKELIK</sequence>
<protein>
    <recommendedName>
        <fullName evidence="1">Pyridoxine 5'-phosphate synthase</fullName>
        <shortName evidence="1">PNP synthase</shortName>
        <ecNumber evidence="1">2.6.99.2</ecNumber>
    </recommendedName>
</protein>
<evidence type="ECO:0000255" key="1">
    <source>
        <dbReference type="HAMAP-Rule" id="MF_00279"/>
    </source>
</evidence>
<accession>A7I3Y5</accession>